<keyword id="KW-0238">DNA-binding</keyword>
<keyword id="KW-0371">Homeobox</keyword>
<keyword id="KW-0539">Nucleus</keyword>
<keyword id="KW-1185">Reference proteome</keyword>
<keyword id="KW-0804">Transcription</keyword>
<keyword id="KW-0805">Transcription regulation</keyword>
<name>ATH1_ARATH</name>
<accession>P48731</accession>
<accession>Q7X9S7</accession>
<protein>
    <recommendedName>
        <fullName>Homeobox protein ATH1</fullName>
    </recommendedName>
</protein>
<organism>
    <name type="scientific">Arabidopsis thaliana</name>
    <name type="common">Mouse-ear cress</name>
    <dbReference type="NCBI Taxonomy" id="3702"/>
    <lineage>
        <taxon>Eukaryota</taxon>
        <taxon>Viridiplantae</taxon>
        <taxon>Streptophyta</taxon>
        <taxon>Embryophyta</taxon>
        <taxon>Tracheophyta</taxon>
        <taxon>Spermatophyta</taxon>
        <taxon>Magnoliopsida</taxon>
        <taxon>eudicotyledons</taxon>
        <taxon>Gunneridae</taxon>
        <taxon>Pentapetalae</taxon>
        <taxon>rosids</taxon>
        <taxon>malvids</taxon>
        <taxon>Brassicales</taxon>
        <taxon>Brassicaceae</taxon>
        <taxon>Camelineae</taxon>
        <taxon>Arabidopsis</taxon>
    </lineage>
</organism>
<proteinExistence type="evidence at protein level"/>
<sequence length="473" mass="53900">MDNNNNNNTFSSLDNVMTNQNPLLMDFIPSREDSTSFSTMLPWNTIRSDPLQMGGFDIFNSMLTNKYLSSSPRSIDVQDNRNVEFMAPPPHPPPLHPLDHLRHYDDSSNNMWGFEANSEFQAFSGVVGPSEPMMSTFGEEDFPFLISNKRNNELSLSLASDVSDECSEISLCAATRLASEQASCSSKDISNNVVTQGFSQLIFGSKYLHSVQEILSHFAAYSLDYSSRGTESGAASSAFTSRFENITEFLDGDSNNSEAGFGSTFQRRALEAKKTHLLDLLQMVDDRYSHCVDEIHTVISAFHAATELDPQLHTRFALQTVSFLYKNLRERICKKIISMGSVLERGKDKTQETSMFHQHCLLQQLKRKNHQIWRPQRGLPEKSVSVLRNWMFQNFLHPYPKDSEKHLLAIRSGLTRSQVSNWFINARVRLWKPMIEEMYAEMNKRKLNNSHIQPNGPTLRMPKSVMMSQAMHK</sequence>
<dbReference type="EMBL" id="X80126">
    <property type="protein sequence ID" value="CAA56426.1"/>
    <property type="molecule type" value="mRNA"/>
</dbReference>
<dbReference type="EMBL" id="X80127">
    <property type="protein sequence ID" value="CAC51426.1"/>
    <property type="status" value="ALT_SEQ"/>
    <property type="molecule type" value="Genomic_DNA"/>
</dbReference>
<dbReference type="EMBL" id="AL031804">
    <property type="protein sequence ID" value="CAA21207.1"/>
    <property type="molecule type" value="Genomic_DNA"/>
</dbReference>
<dbReference type="EMBL" id="AL161582">
    <property type="protein sequence ID" value="CAB80015.1"/>
    <property type="molecule type" value="Genomic_DNA"/>
</dbReference>
<dbReference type="EMBL" id="CP002687">
    <property type="protein sequence ID" value="AEE86154.1"/>
    <property type="molecule type" value="Genomic_DNA"/>
</dbReference>
<dbReference type="EMBL" id="CP002687">
    <property type="protein sequence ID" value="ANM66154.1"/>
    <property type="molecule type" value="Genomic_DNA"/>
</dbReference>
<dbReference type="EMBL" id="AY072174">
    <property type="protein sequence ID" value="AAL59996.1"/>
    <property type="molecule type" value="mRNA"/>
</dbReference>
<dbReference type="EMBL" id="AY096513">
    <property type="protein sequence ID" value="AAM20163.1"/>
    <property type="molecule type" value="mRNA"/>
</dbReference>
<dbReference type="EMBL" id="Z83320">
    <property type="protein sequence ID" value="CAB05910.1"/>
    <property type="molecule type" value="Genomic_DNA"/>
</dbReference>
<dbReference type="PIR" id="T05306">
    <property type="entry name" value="T05306"/>
</dbReference>
<dbReference type="RefSeq" id="NP_001328067.1">
    <property type="nucleotide sequence ID" value="NM_001342189.1"/>
</dbReference>
<dbReference type="RefSeq" id="NP_195024.1">
    <property type="nucleotide sequence ID" value="NM_119452.4"/>
</dbReference>
<dbReference type="SMR" id="P48731"/>
<dbReference type="BioGRID" id="14720">
    <property type="interactions" value="22"/>
</dbReference>
<dbReference type="FunCoup" id="P48731">
    <property type="interactions" value="334"/>
</dbReference>
<dbReference type="IntAct" id="P48731">
    <property type="interactions" value="21"/>
</dbReference>
<dbReference type="STRING" id="3702.P48731"/>
<dbReference type="ChEMBL" id="CHEMBL4295767"/>
<dbReference type="iPTMnet" id="P48731"/>
<dbReference type="PaxDb" id="3702-AT4G32980.1"/>
<dbReference type="ProteomicsDB" id="246624"/>
<dbReference type="EnsemblPlants" id="AT4G32980.1">
    <property type="protein sequence ID" value="AT4G32980.1"/>
    <property type="gene ID" value="AT4G32980"/>
</dbReference>
<dbReference type="EnsemblPlants" id="AT4G32980.2">
    <property type="protein sequence ID" value="AT4G32980.2"/>
    <property type="gene ID" value="AT4G32980"/>
</dbReference>
<dbReference type="GeneID" id="829435"/>
<dbReference type="Gramene" id="AT4G32980.1">
    <property type="protein sequence ID" value="AT4G32980.1"/>
    <property type="gene ID" value="AT4G32980"/>
</dbReference>
<dbReference type="Gramene" id="AT4G32980.2">
    <property type="protein sequence ID" value="AT4G32980.2"/>
    <property type="gene ID" value="AT4G32980"/>
</dbReference>
<dbReference type="KEGG" id="ath:AT4G32980"/>
<dbReference type="Araport" id="AT4G32980"/>
<dbReference type="TAIR" id="AT4G32980">
    <property type="gene designation" value="ATH1"/>
</dbReference>
<dbReference type="eggNOG" id="KOG0773">
    <property type="taxonomic scope" value="Eukaryota"/>
</dbReference>
<dbReference type="HOGENOM" id="CLU_587099_0_0_1"/>
<dbReference type="InParanoid" id="P48731"/>
<dbReference type="OMA" id="SMFHQHC"/>
<dbReference type="PhylomeDB" id="P48731"/>
<dbReference type="PRO" id="PR:P48731"/>
<dbReference type="Proteomes" id="UP000006548">
    <property type="component" value="Chromosome 4"/>
</dbReference>
<dbReference type="ExpressionAtlas" id="P48731">
    <property type="expression patterns" value="baseline and differential"/>
</dbReference>
<dbReference type="GO" id="GO:0005634">
    <property type="term" value="C:nucleus"/>
    <property type="evidence" value="ECO:0000314"/>
    <property type="project" value="TAIR"/>
</dbReference>
<dbReference type="GO" id="GO:0003677">
    <property type="term" value="F:DNA binding"/>
    <property type="evidence" value="ECO:0000250"/>
    <property type="project" value="TAIR"/>
</dbReference>
<dbReference type="GO" id="GO:0003700">
    <property type="term" value="F:DNA-binding transcription factor activity"/>
    <property type="evidence" value="ECO:0000250"/>
    <property type="project" value="TAIR"/>
</dbReference>
<dbReference type="GO" id="GO:0043565">
    <property type="term" value="F:sequence-specific DNA binding"/>
    <property type="evidence" value="ECO:0000314"/>
    <property type="project" value="TAIR"/>
</dbReference>
<dbReference type="GO" id="GO:0010227">
    <property type="term" value="P:floral organ abscission"/>
    <property type="evidence" value="ECO:0000315"/>
    <property type="project" value="TAIR"/>
</dbReference>
<dbReference type="GO" id="GO:0010073">
    <property type="term" value="P:meristem maintenance"/>
    <property type="evidence" value="ECO:0000316"/>
    <property type="project" value="TAIR"/>
</dbReference>
<dbReference type="GO" id="GO:0008285">
    <property type="term" value="P:negative regulation of cell population proliferation"/>
    <property type="evidence" value="ECO:0000315"/>
    <property type="project" value="TAIR"/>
</dbReference>
<dbReference type="GO" id="GO:0009640">
    <property type="term" value="P:photomorphogenesis"/>
    <property type="evidence" value="ECO:0000314"/>
    <property type="project" value="TAIR"/>
</dbReference>
<dbReference type="GO" id="GO:0010371">
    <property type="term" value="P:regulation of gibberellin biosynthetic process"/>
    <property type="evidence" value="ECO:0000315"/>
    <property type="project" value="TAIR"/>
</dbReference>
<dbReference type="GO" id="GO:0090470">
    <property type="term" value="P:shoot organ boundary specification"/>
    <property type="evidence" value="ECO:0000315"/>
    <property type="project" value="TAIR"/>
</dbReference>
<dbReference type="GO" id="GO:0010228">
    <property type="term" value="P:vegetative to reproductive phase transition of meristem"/>
    <property type="evidence" value="ECO:0000315"/>
    <property type="project" value="TAIR"/>
</dbReference>
<dbReference type="CDD" id="cd00086">
    <property type="entry name" value="homeodomain"/>
    <property type="match status" value="1"/>
</dbReference>
<dbReference type="Gene3D" id="1.10.10.60">
    <property type="entry name" value="Homeodomain-like"/>
    <property type="match status" value="1"/>
</dbReference>
<dbReference type="InterPro" id="IPR001356">
    <property type="entry name" value="HD"/>
</dbReference>
<dbReference type="InterPro" id="IPR009057">
    <property type="entry name" value="Homeodomain-like_sf"/>
</dbReference>
<dbReference type="InterPro" id="IPR008422">
    <property type="entry name" value="KN_HD"/>
</dbReference>
<dbReference type="InterPro" id="IPR006563">
    <property type="entry name" value="POX_dom"/>
</dbReference>
<dbReference type="InterPro" id="IPR050224">
    <property type="entry name" value="TALE_homeobox"/>
</dbReference>
<dbReference type="PANTHER" id="PTHR11850">
    <property type="entry name" value="HOMEOBOX PROTEIN TRANSCRIPTION FACTORS"/>
    <property type="match status" value="1"/>
</dbReference>
<dbReference type="Pfam" id="PF05920">
    <property type="entry name" value="Homeobox_KN"/>
    <property type="match status" value="1"/>
</dbReference>
<dbReference type="Pfam" id="PF07526">
    <property type="entry name" value="POX"/>
    <property type="match status" value="1"/>
</dbReference>
<dbReference type="SMART" id="SM00389">
    <property type="entry name" value="HOX"/>
    <property type="match status" value="1"/>
</dbReference>
<dbReference type="SMART" id="SM00574">
    <property type="entry name" value="POX"/>
    <property type="match status" value="1"/>
</dbReference>
<dbReference type="SUPFAM" id="SSF46689">
    <property type="entry name" value="Homeodomain-like"/>
    <property type="match status" value="1"/>
</dbReference>
<dbReference type="PROSITE" id="PS00027">
    <property type="entry name" value="HOMEOBOX_1"/>
    <property type="match status" value="1"/>
</dbReference>
<dbReference type="PROSITE" id="PS50071">
    <property type="entry name" value="HOMEOBOX_2"/>
    <property type="match status" value="1"/>
</dbReference>
<gene>
    <name type="primary">ATH1</name>
    <name type="ordered locus">At4g32980</name>
    <name type="ORF">F26P21.100</name>
</gene>
<evidence type="ECO:0000255" key="1">
    <source>
        <dbReference type="PROSITE-ProRule" id="PRU00108"/>
    </source>
</evidence>
<evidence type="ECO:0000256" key="2">
    <source>
        <dbReference type="SAM" id="MobiDB-lite"/>
    </source>
</evidence>
<evidence type="ECO:0000269" key="3">
    <source>
    </source>
</evidence>
<evidence type="ECO:0000305" key="4"/>
<comment type="function">
    <text evidence="3">Transcription factor which may be involved in the signal transduction pathway downstream of the COP1 gene. Controls floral competency as a specific activator of FLC expression. Is responsive of the nuclear import of SHOOT MERISTEMLESS (STM).</text>
</comment>
<comment type="subunit">
    <text>May form heterodimeric complex with the TALE/KNOX protein STM.</text>
</comment>
<comment type="interaction">
    <interactant intactId="EBI-912904">
        <id>P48731</id>
    </interactant>
    <interactant intactId="EBI-530486">
        <id>P46639</id>
        <label>KNAT1</label>
    </interactant>
    <organismsDiffer>false</organismsDiffer>
    <experiments>6</experiments>
</comment>
<comment type="interaction">
    <interactant intactId="EBI-912904">
        <id>P48731</id>
    </interactant>
    <interactant intactId="EBI-530523">
        <id>Q38874</id>
        <label>STM</label>
    </interactant>
    <organismsDiffer>false</organismsDiffer>
    <experiments>9</experiments>
</comment>
<comment type="subcellular location">
    <subcellularLocation>
        <location evidence="4">Nucleus</location>
    </subcellularLocation>
</comment>
<comment type="tissue specificity">
    <text>Most abundant in flowers.</text>
</comment>
<comment type="developmental stage">
    <text evidence="3">Down-regulated in the shoot apical meristem (SAM) upon floral induction.</text>
</comment>
<comment type="induction">
    <text>By light. In etiolated seedlings, maximally expressed after 3 days of illumination.</text>
</comment>
<comment type="domain">
    <text>The SR/KY and BELL domains are responsive for the interaction between the TALE/BELL proteins and the TALE/KNOX proteins.</text>
</comment>
<comment type="similarity">
    <text evidence="4">Belongs to the TALE/BELL homeobox family.</text>
</comment>
<comment type="sequence caution" evidence="4">
    <conflict type="erroneous gene model prediction">
        <sequence resource="EMBL-CDS" id="CAC51426"/>
    </conflict>
</comment>
<reference key="1">
    <citation type="journal article" date="1995" name="Plant Cell">
        <title>The homeobox gene ATH1 of Arabidopsis is derepressed in the photomorphogenic mutants cop1 and det1.</title>
        <authorList>
            <person name="Quaedvlieg N."/>
            <person name="Dockx J."/>
            <person name="Rook F."/>
            <person name="Weisbeek P.J."/>
            <person name="Smeekens S.C.M."/>
        </authorList>
    </citation>
    <scope>NUCLEOTIDE SEQUENCE [GENOMIC DNA / MRNA]</scope>
    <source>
        <strain>cv. Columbia</strain>
        <tissue>Rosette leaf</tissue>
        <tissue>Seedling</tissue>
    </source>
</reference>
<reference key="2">
    <citation type="journal article" date="1999" name="Nature">
        <title>Sequence and analysis of chromosome 4 of the plant Arabidopsis thaliana.</title>
        <authorList>
            <person name="Mayer K.F.X."/>
            <person name="Schueller C."/>
            <person name="Wambutt R."/>
            <person name="Murphy G."/>
            <person name="Volckaert G."/>
            <person name="Pohl T."/>
            <person name="Duesterhoeft A."/>
            <person name="Stiekema W."/>
            <person name="Entian K.-D."/>
            <person name="Terryn N."/>
            <person name="Harris B."/>
            <person name="Ansorge W."/>
            <person name="Brandt P."/>
            <person name="Grivell L.A."/>
            <person name="Rieger M."/>
            <person name="Weichselgartner M."/>
            <person name="de Simone V."/>
            <person name="Obermaier B."/>
            <person name="Mache R."/>
            <person name="Mueller M."/>
            <person name="Kreis M."/>
            <person name="Delseny M."/>
            <person name="Puigdomenech P."/>
            <person name="Watson M."/>
            <person name="Schmidtheini T."/>
            <person name="Reichert B."/>
            <person name="Portetelle D."/>
            <person name="Perez-Alonso M."/>
            <person name="Boutry M."/>
            <person name="Bancroft I."/>
            <person name="Vos P."/>
            <person name="Hoheisel J."/>
            <person name="Zimmermann W."/>
            <person name="Wedler H."/>
            <person name="Ridley P."/>
            <person name="Langham S.-A."/>
            <person name="McCullagh B."/>
            <person name="Bilham L."/>
            <person name="Robben J."/>
            <person name="van der Schueren J."/>
            <person name="Grymonprez B."/>
            <person name="Chuang Y.-J."/>
            <person name="Vandenbussche F."/>
            <person name="Braeken M."/>
            <person name="Weltjens I."/>
            <person name="Voet M."/>
            <person name="Bastiaens I."/>
            <person name="Aert R."/>
            <person name="Defoor E."/>
            <person name="Weitzenegger T."/>
            <person name="Bothe G."/>
            <person name="Ramsperger U."/>
            <person name="Hilbert H."/>
            <person name="Braun M."/>
            <person name="Holzer E."/>
            <person name="Brandt A."/>
            <person name="Peters S."/>
            <person name="van Staveren M."/>
            <person name="Dirkse W."/>
            <person name="Mooijman P."/>
            <person name="Klein Lankhorst R."/>
            <person name="Rose M."/>
            <person name="Hauf J."/>
            <person name="Koetter P."/>
            <person name="Berneiser S."/>
            <person name="Hempel S."/>
            <person name="Feldpausch M."/>
            <person name="Lamberth S."/>
            <person name="Van den Daele H."/>
            <person name="De Keyser A."/>
            <person name="Buysshaert C."/>
            <person name="Gielen J."/>
            <person name="Villarroel R."/>
            <person name="De Clercq R."/>
            <person name="van Montagu M."/>
            <person name="Rogers J."/>
            <person name="Cronin A."/>
            <person name="Quail M.A."/>
            <person name="Bray-Allen S."/>
            <person name="Clark L."/>
            <person name="Doggett J."/>
            <person name="Hall S."/>
            <person name="Kay M."/>
            <person name="Lennard N."/>
            <person name="McLay K."/>
            <person name="Mayes R."/>
            <person name="Pettett A."/>
            <person name="Rajandream M.A."/>
            <person name="Lyne M."/>
            <person name="Benes V."/>
            <person name="Rechmann S."/>
            <person name="Borkova D."/>
            <person name="Bloecker H."/>
            <person name="Scharfe M."/>
            <person name="Grimm M."/>
            <person name="Loehnert T.-H."/>
            <person name="Dose S."/>
            <person name="de Haan M."/>
            <person name="Maarse A.C."/>
            <person name="Schaefer M."/>
            <person name="Mueller-Auer S."/>
            <person name="Gabel C."/>
            <person name="Fuchs M."/>
            <person name="Fartmann B."/>
            <person name="Granderath K."/>
            <person name="Dauner D."/>
            <person name="Herzl A."/>
            <person name="Neumann S."/>
            <person name="Argiriou A."/>
            <person name="Vitale D."/>
            <person name="Liguori R."/>
            <person name="Piravandi E."/>
            <person name="Massenet O."/>
            <person name="Quigley F."/>
            <person name="Clabauld G."/>
            <person name="Muendlein A."/>
            <person name="Felber R."/>
            <person name="Schnabl S."/>
            <person name="Hiller R."/>
            <person name="Schmidt W."/>
            <person name="Lecharny A."/>
            <person name="Aubourg S."/>
            <person name="Chefdor F."/>
            <person name="Cooke R."/>
            <person name="Berger C."/>
            <person name="Monfort A."/>
            <person name="Casacuberta E."/>
            <person name="Gibbons T."/>
            <person name="Weber N."/>
            <person name="Vandenbol M."/>
            <person name="Bargues M."/>
            <person name="Terol J."/>
            <person name="Torres A."/>
            <person name="Perez-Perez A."/>
            <person name="Purnelle B."/>
            <person name="Bent E."/>
            <person name="Johnson S."/>
            <person name="Tacon D."/>
            <person name="Jesse T."/>
            <person name="Heijnen L."/>
            <person name="Schwarz S."/>
            <person name="Scholler P."/>
            <person name="Heber S."/>
            <person name="Francs P."/>
            <person name="Bielke C."/>
            <person name="Frishman D."/>
            <person name="Haase D."/>
            <person name="Lemcke K."/>
            <person name="Mewes H.-W."/>
            <person name="Stocker S."/>
            <person name="Zaccaria P."/>
            <person name="Bevan M."/>
            <person name="Wilson R.K."/>
            <person name="de la Bastide M."/>
            <person name="Habermann K."/>
            <person name="Parnell L."/>
            <person name="Dedhia N."/>
            <person name="Gnoj L."/>
            <person name="Schutz K."/>
            <person name="Huang E."/>
            <person name="Spiegel L."/>
            <person name="Sekhon M."/>
            <person name="Murray J."/>
            <person name="Sheet P."/>
            <person name="Cordes M."/>
            <person name="Abu-Threideh J."/>
            <person name="Stoneking T."/>
            <person name="Kalicki J."/>
            <person name="Graves T."/>
            <person name="Harmon G."/>
            <person name="Edwards J."/>
            <person name="Latreille P."/>
            <person name="Courtney L."/>
            <person name="Cloud J."/>
            <person name="Abbott A."/>
            <person name="Scott K."/>
            <person name="Johnson D."/>
            <person name="Minx P."/>
            <person name="Bentley D."/>
            <person name="Fulton B."/>
            <person name="Miller N."/>
            <person name="Greco T."/>
            <person name="Kemp K."/>
            <person name="Kramer J."/>
            <person name="Fulton L."/>
            <person name="Mardis E."/>
            <person name="Dante M."/>
            <person name="Pepin K."/>
            <person name="Hillier L.W."/>
            <person name="Nelson J."/>
            <person name="Spieth J."/>
            <person name="Ryan E."/>
            <person name="Andrews S."/>
            <person name="Geisel C."/>
            <person name="Layman D."/>
            <person name="Du H."/>
            <person name="Ali J."/>
            <person name="Berghoff A."/>
            <person name="Jones K."/>
            <person name="Drone K."/>
            <person name="Cotton M."/>
            <person name="Joshu C."/>
            <person name="Antonoiu B."/>
            <person name="Zidanic M."/>
            <person name="Strong C."/>
            <person name="Sun H."/>
            <person name="Lamar B."/>
            <person name="Yordan C."/>
            <person name="Ma P."/>
            <person name="Zhong J."/>
            <person name="Preston R."/>
            <person name="Vil D."/>
            <person name="Shekher M."/>
            <person name="Matero A."/>
            <person name="Shah R."/>
            <person name="Swaby I.K."/>
            <person name="O'Shaughnessy A."/>
            <person name="Rodriguez M."/>
            <person name="Hoffman J."/>
            <person name="Till S."/>
            <person name="Granat S."/>
            <person name="Shohdy N."/>
            <person name="Hasegawa A."/>
            <person name="Hameed A."/>
            <person name="Lodhi M."/>
            <person name="Johnson A."/>
            <person name="Chen E."/>
            <person name="Marra M.A."/>
            <person name="Martienssen R."/>
            <person name="McCombie W.R."/>
        </authorList>
    </citation>
    <scope>NUCLEOTIDE SEQUENCE [LARGE SCALE GENOMIC DNA]</scope>
    <source>
        <strain>cv. Columbia</strain>
    </source>
</reference>
<reference key="3">
    <citation type="journal article" date="2017" name="Plant J.">
        <title>Araport11: a complete reannotation of the Arabidopsis thaliana reference genome.</title>
        <authorList>
            <person name="Cheng C.Y."/>
            <person name="Krishnakumar V."/>
            <person name="Chan A.P."/>
            <person name="Thibaud-Nissen F."/>
            <person name="Schobel S."/>
            <person name="Town C.D."/>
        </authorList>
    </citation>
    <scope>GENOME REANNOTATION</scope>
    <source>
        <strain>cv. Columbia</strain>
    </source>
</reference>
<reference key="4">
    <citation type="journal article" date="2003" name="Science">
        <title>Empirical analysis of transcriptional activity in the Arabidopsis genome.</title>
        <authorList>
            <person name="Yamada K."/>
            <person name="Lim J."/>
            <person name="Dale J.M."/>
            <person name="Chen H."/>
            <person name="Shinn P."/>
            <person name="Palm C.J."/>
            <person name="Southwick A.M."/>
            <person name="Wu H.C."/>
            <person name="Kim C.J."/>
            <person name="Nguyen M."/>
            <person name="Pham P.K."/>
            <person name="Cheuk R.F."/>
            <person name="Karlin-Newmann G."/>
            <person name="Liu S.X."/>
            <person name="Lam B."/>
            <person name="Sakano H."/>
            <person name="Wu T."/>
            <person name="Yu G."/>
            <person name="Miranda M."/>
            <person name="Quach H.L."/>
            <person name="Tripp M."/>
            <person name="Chang C.H."/>
            <person name="Lee J.M."/>
            <person name="Toriumi M.J."/>
            <person name="Chan M.M."/>
            <person name="Tang C.C."/>
            <person name="Onodera C.S."/>
            <person name="Deng J.M."/>
            <person name="Akiyama K."/>
            <person name="Ansari Y."/>
            <person name="Arakawa T."/>
            <person name="Banh J."/>
            <person name="Banno F."/>
            <person name="Bowser L."/>
            <person name="Brooks S.Y."/>
            <person name="Carninci P."/>
            <person name="Chao Q."/>
            <person name="Choy N."/>
            <person name="Enju A."/>
            <person name="Goldsmith A.D."/>
            <person name="Gurjal M."/>
            <person name="Hansen N.F."/>
            <person name="Hayashizaki Y."/>
            <person name="Johnson-Hopson C."/>
            <person name="Hsuan V.W."/>
            <person name="Iida K."/>
            <person name="Karnes M."/>
            <person name="Khan S."/>
            <person name="Koesema E."/>
            <person name="Ishida J."/>
            <person name="Jiang P.X."/>
            <person name="Jones T."/>
            <person name="Kawai J."/>
            <person name="Kamiya A."/>
            <person name="Meyers C."/>
            <person name="Nakajima M."/>
            <person name="Narusaka M."/>
            <person name="Seki M."/>
            <person name="Sakurai T."/>
            <person name="Satou M."/>
            <person name="Tamse R."/>
            <person name="Vaysberg M."/>
            <person name="Wallender E.K."/>
            <person name="Wong C."/>
            <person name="Yamamura Y."/>
            <person name="Yuan S."/>
            <person name="Shinozaki K."/>
            <person name="Davis R.W."/>
            <person name="Theologis A."/>
            <person name="Ecker J.R."/>
        </authorList>
    </citation>
    <scope>NUCLEOTIDE SEQUENCE [LARGE SCALE MRNA]</scope>
    <source>
        <strain>cv. Columbia</strain>
    </source>
</reference>
<reference key="5">
    <citation type="journal article" date="1997" name="Nucleic Acids Res.">
        <title>Analysis of the chromatin domain organisation around the plastocyanin gene reveals an MAR-specific sequence element in Arabidopsis thaliana.</title>
        <authorList>
            <person name="van Drunen C.M."/>
            <person name="Oosterling R.W."/>
            <person name="Keultjes G.M."/>
            <person name="Weisbeek P.J."/>
            <person name="van Driel R."/>
            <person name="Smeekens S.C.M."/>
        </authorList>
    </citation>
    <scope>NUCLEOTIDE SEQUENCE [GENOMIC DNA] OF 1-228</scope>
    <source>
        <strain>cv. Columbia</strain>
        <tissue>Rosette leaf</tissue>
    </source>
</reference>
<reference key="6">
    <citation type="journal article" date="2004" name="Curr. Biol.">
        <title>Competence to respond to floral inductive signals requires the homeobox genes PENNYWISE and POUND-FOOLISH.</title>
        <authorList>
            <person name="Smith H.M.S."/>
            <person name="Campbell B.C.C."/>
            <person name="Hake S."/>
        </authorList>
    </citation>
    <scope>GENE FAMILY ORGANIZATION</scope>
</reference>
<reference key="7">
    <citation type="journal article" date="2006" name="Nucleic Acids Res.">
        <title>Nuclear import of the transcription factor SHOOT MERISTEMLESS depends on heterodimerization with BLH proteins expressed in discrete sub-domains of the shoot apical meristem of Arabidopsis thaliana.</title>
        <authorList>
            <person name="Cole M."/>
            <person name="Nolte C."/>
            <person name="Werr W."/>
        </authorList>
    </citation>
    <scope>INTERACTION WITH STM</scope>
</reference>
<reference key="8">
    <citation type="journal article" date="2007" name="Plant J.">
        <title>The Arabidopsis TALE homeobox gene ATH1 controls floral competency through positive regulation of FLC.</title>
        <authorList>
            <person name="Proveniers M."/>
            <person name="Rutjens B."/>
            <person name="Brand M."/>
            <person name="Smeekens S.C.M."/>
        </authorList>
    </citation>
    <scope>FUNCTION</scope>
    <scope>DEVELOPMENTAL STAGE</scope>
</reference>
<feature type="chain" id="PRO_0000048821" description="Homeobox protein ATH1">
    <location>
        <begin position="1"/>
        <end position="473"/>
    </location>
</feature>
<feature type="DNA-binding region" description="Homeobox" evidence="1">
    <location>
        <begin position="372"/>
        <end position="434"/>
    </location>
</feature>
<feature type="region of interest" description="SR/KY domain">
    <location>
        <begin position="205"/>
        <end position="221"/>
    </location>
</feature>
<feature type="region of interest" description="BELL domain">
    <location>
        <begin position="266"/>
        <end position="336"/>
    </location>
</feature>
<feature type="region of interest" description="Disordered" evidence="2">
    <location>
        <begin position="448"/>
        <end position="473"/>
    </location>
</feature>